<keyword id="KW-0004">4Fe-4S</keyword>
<keyword id="KW-0963">Cytoplasm</keyword>
<keyword id="KW-1015">Disulfide bond</keyword>
<keyword id="KW-0408">Iron</keyword>
<keyword id="KW-0411">Iron-sulfur</keyword>
<keyword id="KW-0479">Metal-binding</keyword>
<keyword id="KW-0489">Methyltransferase</keyword>
<keyword id="KW-1185">Reference proteome</keyword>
<keyword id="KW-0698">rRNA processing</keyword>
<keyword id="KW-0949">S-adenosyl-L-methionine</keyword>
<keyword id="KW-0808">Transferase</keyword>
<keyword id="KW-0819">tRNA processing</keyword>
<feature type="chain" id="PRO_0000350060" description="Dual-specificity RNA methyltransferase RlmN">
    <location>
        <begin position="1"/>
        <end position="403"/>
    </location>
</feature>
<feature type="domain" description="Radical SAM core" evidence="2">
    <location>
        <begin position="132"/>
        <end position="375"/>
    </location>
</feature>
<feature type="active site" description="Proton acceptor" evidence="1">
    <location>
        <position position="126"/>
    </location>
</feature>
<feature type="active site" description="S-methylcysteine intermediate" evidence="1">
    <location>
        <position position="378"/>
    </location>
</feature>
<feature type="binding site" evidence="1">
    <location>
        <position position="146"/>
    </location>
    <ligand>
        <name>[4Fe-4S] cluster</name>
        <dbReference type="ChEBI" id="CHEBI:49883"/>
        <note>4Fe-4S-S-AdoMet</note>
    </ligand>
</feature>
<feature type="binding site" evidence="1">
    <location>
        <position position="150"/>
    </location>
    <ligand>
        <name>[4Fe-4S] cluster</name>
        <dbReference type="ChEBI" id="CHEBI:49883"/>
        <note>4Fe-4S-S-AdoMet</note>
    </ligand>
</feature>
<feature type="binding site" evidence="1">
    <location>
        <position position="153"/>
    </location>
    <ligand>
        <name>[4Fe-4S] cluster</name>
        <dbReference type="ChEBI" id="CHEBI:49883"/>
        <note>4Fe-4S-S-AdoMet</note>
    </ligand>
</feature>
<feature type="binding site" evidence="1">
    <location>
        <begin position="204"/>
        <end position="205"/>
    </location>
    <ligand>
        <name>S-adenosyl-L-methionine</name>
        <dbReference type="ChEBI" id="CHEBI:59789"/>
    </ligand>
</feature>
<feature type="binding site" evidence="1">
    <location>
        <position position="236"/>
    </location>
    <ligand>
        <name>S-adenosyl-L-methionine</name>
        <dbReference type="ChEBI" id="CHEBI:59789"/>
    </ligand>
</feature>
<feature type="binding site" evidence="1">
    <location>
        <begin position="258"/>
        <end position="260"/>
    </location>
    <ligand>
        <name>S-adenosyl-L-methionine</name>
        <dbReference type="ChEBI" id="CHEBI:59789"/>
    </ligand>
</feature>
<feature type="binding site" evidence="1">
    <location>
        <position position="335"/>
    </location>
    <ligand>
        <name>S-adenosyl-L-methionine</name>
        <dbReference type="ChEBI" id="CHEBI:59789"/>
    </ligand>
</feature>
<feature type="disulfide bond" description="(transient)" evidence="1">
    <location>
        <begin position="139"/>
        <end position="378"/>
    </location>
</feature>
<reference key="1">
    <citation type="journal article" date="2007" name="Science">
        <title>Legumes symbioses: absence of nod genes in photosynthetic bradyrhizobia.</title>
        <authorList>
            <person name="Giraud E."/>
            <person name="Moulin L."/>
            <person name="Vallenet D."/>
            <person name="Barbe V."/>
            <person name="Cytryn E."/>
            <person name="Avarre J.-C."/>
            <person name="Jaubert M."/>
            <person name="Simon D."/>
            <person name="Cartieaux F."/>
            <person name="Prin Y."/>
            <person name="Bena G."/>
            <person name="Hannibal L."/>
            <person name="Fardoux J."/>
            <person name="Kojadinovic M."/>
            <person name="Vuillet L."/>
            <person name="Lajus A."/>
            <person name="Cruveiller S."/>
            <person name="Rouy Z."/>
            <person name="Mangenot S."/>
            <person name="Segurens B."/>
            <person name="Dossat C."/>
            <person name="Franck W.L."/>
            <person name="Chang W.-S."/>
            <person name="Saunders E."/>
            <person name="Bruce D."/>
            <person name="Richardson P."/>
            <person name="Normand P."/>
            <person name="Dreyfus B."/>
            <person name="Pignol D."/>
            <person name="Stacey G."/>
            <person name="Emerich D."/>
            <person name="Vermeglio A."/>
            <person name="Medigue C."/>
            <person name="Sadowsky M."/>
        </authorList>
    </citation>
    <scope>NUCLEOTIDE SEQUENCE [LARGE SCALE GENOMIC DNA]</scope>
    <source>
        <strain>BTAi1 / ATCC BAA-1182</strain>
    </source>
</reference>
<name>RLMN_BRASB</name>
<protein>
    <recommendedName>
        <fullName evidence="1">Dual-specificity RNA methyltransferase RlmN</fullName>
        <ecNumber evidence="1">2.1.1.192</ecNumber>
    </recommendedName>
    <alternativeName>
        <fullName evidence="1">23S rRNA (adenine(2503)-C(2))-methyltransferase</fullName>
    </alternativeName>
    <alternativeName>
        <fullName evidence="1">23S rRNA m2A2503 methyltransferase</fullName>
    </alternativeName>
    <alternativeName>
        <fullName evidence="1">Ribosomal RNA large subunit methyltransferase N</fullName>
    </alternativeName>
    <alternativeName>
        <fullName evidence="1">tRNA (adenine(37)-C(2))-methyltransferase</fullName>
    </alternativeName>
    <alternativeName>
        <fullName evidence="1">tRNA m2A37 methyltransferase</fullName>
    </alternativeName>
</protein>
<gene>
    <name evidence="1" type="primary">rlmN</name>
    <name type="ordered locus">BBta_0241</name>
</gene>
<proteinExistence type="inferred from homology"/>
<comment type="function">
    <text evidence="1">Specifically methylates position 2 of adenine 2503 in 23S rRNA and position 2 of adenine 37 in tRNAs. m2A2503 modification seems to play a crucial role in the proofreading step occurring at the peptidyl transferase center and thus would serve to optimize ribosomal fidelity.</text>
</comment>
<comment type="catalytic activity">
    <reaction evidence="1">
        <text>adenosine(2503) in 23S rRNA + 2 reduced [2Fe-2S]-[ferredoxin] + 2 S-adenosyl-L-methionine = 2-methyladenosine(2503) in 23S rRNA + 5'-deoxyadenosine + L-methionine + 2 oxidized [2Fe-2S]-[ferredoxin] + S-adenosyl-L-homocysteine</text>
        <dbReference type="Rhea" id="RHEA:42916"/>
        <dbReference type="Rhea" id="RHEA-COMP:10000"/>
        <dbReference type="Rhea" id="RHEA-COMP:10001"/>
        <dbReference type="Rhea" id="RHEA-COMP:10152"/>
        <dbReference type="Rhea" id="RHEA-COMP:10282"/>
        <dbReference type="ChEBI" id="CHEBI:17319"/>
        <dbReference type="ChEBI" id="CHEBI:33737"/>
        <dbReference type="ChEBI" id="CHEBI:33738"/>
        <dbReference type="ChEBI" id="CHEBI:57844"/>
        <dbReference type="ChEBI" id="CHEBI:57856"/>
        <dbReference type="ChEBI" id="CHEBI:59789"/>
        <dbReference type="ChEBI" id="CHEBI:74411"/>
        <dbReference type="ChEBI" id="CHEBI:74497"/>
        <dbReference type="EC" id="2.1.1.192"/>
    </reaction>
</comment>
<comment type="catalytic activity">
    <reaction evidence="1">
        <text>adenosine(37) in tRNA + 2 reduced [2Fe-2S]-[ferredoxin] + 2 S-adenosyl-L-methionine = 2-methyladenosine(37) in tRNA + 5'-deoxyadenosine + L-methionine + 2 oxidized [2Fe-2S]-[ferredoxin] + S-adenosyl-L-homocysteine</text>
        <dbReference type="Rhea" id="RHEA:43332"/>
        <dbReference type="Rhea" id="RHEA-COMP:10000"/>
        <dbReference type="Rhea" id="RHEA-COMP:10001"/>
        <dbReference type="Rhea" id="RHEA-COMP:10162"/>
        <dbReference type="Rhea" id="RHEA-COMP:10485"/>
        <dbReference type="ChEBI" id="CHEBI:17319"/>
        <dbReference type="ChEBI" id="CHEBI:33737"/>
        <dbReference type="ChEBI" id="CHEBI:33738"/>
        <dbReference type="ChEBI" id="CHEBI:57844"/>
        <dbReference type="ChEBI" id="CHEBI:57856"/>
        <dbReference type="ChEBI" id="CHEBI:59789"/>
        <dbReference type="ChEBI" id="CHEBI:74411"/>
        <dbReference type="ChEBI" id="CHEBI:74497"/>
        <dbReference type="EC" id="2.1.1.192"/>
    </reaction>
</comment>
<comment type="cofactor">
    <cofactor evidence="1">
        <name>[4Fe-4S] cluster</name>
        <dbReference type="ChEBI" id="CHEBI:49883"/>
    </cofactor>
    <text evidence="1">Binds 1 [4Fe-4S] cluster. The cluster is coordinated with 3 cysteines and an exchangeable S-adenosyl-L-methionine.</text>
</comment>
<comment type="subcellular location">
    <subcellularLocation>
        <location evidence="1">Cytoplasm</location>
    </subcellularLocation>
</comment>
<comment type="miscellaneous">
    <text evidence="1">Reaction proceeds by a ping-pong mechanism involving intermediate methylation of a conserved cysteine residue.</text>
</comment>
<comment type="similarity">
    <text evidence="1">Belongs to the radical SAM superfamily. RlmN family.</text>
</comment>
<dbReference type="EC" id="2.1.1.192" evidence="1"/>
<dbReference type="EMBL" id="CP000494">
    <property type="protein sequence ID" value="ABQ32537.1"/>
    <property type="molecule type" value="Genomic_DNA"/>
</dbReference>
<dbReference type="RefSeq" id="WP_012040594.1">
    <property type="nucleotide sequence ID" value="NC_009485.1"/>
</dbReference>
<dbReference type="SMR" id="A5E8P3"/>
<dbReference type="STRING" id="288000.BBta_0241"/>
<dbReference type="KEGG" id="bbt:BBta_0241"/>
<dbReference type="eggNOG" id="COG0820">
    <property type="taxonomic scope" value="Bacteria"/>
</dbReference>
<dbReference type="HOGENOM" id="CLU_029101_2_0_5"/>
<dbReference type="OrthoDB" id="9793973at2"/>
<dbReference type="Proteomes" id="UP000000246">
    <property type="component" value="Chromosome"/>
</dbReference>
<dbReference type="GO" id="GO:0005737">
    <property type="term" value="C:cytoplasm"/>
    <property type="evidence" value="ECO:0007669"/>
    <property type="project" value="UniProtKB-SubCell"/>
</dbReference>
<dbReference type="GO" id="GO:0051539">
    <property type="term" value="F:4 iron, 4 sulfur cluster binding"/>
    <property type="evidence" value="ECO:0007669"/>
    <property type="project" value="UniProtKB-UniRule"/>
</dbReference>
<dbReference type="GO" id="GO:0046872">
    <property type="term" value="F:metal ion binding"/>
    <property type="evidence" value="ECO:0007669"/>
    <property type="project" value="UniProtKB-KW"/>
</dbReference>
<dbReference type="GO" id="GO:0070040">
    <property type="term" value="F:rRNA (adenine(2503)-C2-)-methyltransferase activity"/>
    <property type="evidence" value="ECO:0007669"/>
    <property type="project" value="UniProtKB-UniRule"/>
</dbReference>
<dbReference type="GO" id="GO:0019843">
    <property type="term" value="F:rRNA binding"/>
    <property type="evidence" value="ECO:0007669"/>
    <property type="project" value="UniProtKB-UniRule"/>
</dbReference>
<dbReference type="GO" id="GO:0002935">
    <property type="term" value="F:tRNA (adenine(37)-C2)-methyltransferase activity"/>
    <property type="evidence" value="ECO:0007669"/>
    <property type="project" value="UniProtKB-UniRule"/>
</dbReference>
<dbReference type="GO" id="GO:0000049">
    <property type="term" value="F:tRNA binding"/>
    <property type="evidence" value="ECO:0007669"/>
    <property type="project" value="UniProtKB-UniRule"/>
</dbReference>
<dbReference type="GO" id="GO:0070475">
    <property type="term" value="P:rRNA base methylation"/>
    <property type="evidence" value="ECO:0007669"/>
    <property type="project" value="UniProtKB-UniRule"/>
</dbReference>
<dbReference type="GO" id="GO:0030488">
    <property type="term" value="P:tRNA methylation"/>
    <property type="evidence" value="ECO:0007669"/>
    <property type="project" value="UniProtKB-UniRule"/>
</dbReference>
<dbReference type="CDD" id="cd01335">
    <property type="entry name" value="Radical_SAM"/>
    <property type="match status" value="1"/>
</dbReference>
<dbReference type="FunFam" id="3.20.20.70:FF:000008">
    <property type="entry name" value="Dual-specificity RNA methyltransferase RlmN"/>
    <property type="match status" value="1"/>
</dbReference>
<dbReference type="Gene3D" id="1.10.150.530">
    <property type="match status" value="1"/>
</dbReference>
<dbReference type="Gene3D" id="3.20.20.70">
    <property type="entry name" value="Aldolase class I"/>
    <property type="match status" value="1"/>
</dbReference>
<dbReference type="HAMAP" id="MF_01849">
    <property type="entry name" value="RNA_methyltr_RlmN"/>
    <property type="match status" value="1"/>
</dbReference>
<dbReference type="InterPro" id="IPR013785">
    <property type="entry name" value="Aldolase_TIM"/>
</dbReference>
<dbReference type="InterPro" id="IPR006638">
    <property type="entry name" value="Elp3/MiaA/NifB-like_rSAM"/>
</dbReference>
<dbReference type="InterPro" id="IPR040072">
    <property type="entry name" value="Methyltransferase_A"/>
</dbReference>
<dbReference type="InterPro" id="IPR048641">
    <property type="entry name" value="RlmN_N"/>
</dbReference>
<dbReference type="InterPro" id="IPR027492">
    <property type="entry name" value="RNA_MTrfase_RlmN"/>
</dbReference>
<dbReference type="InterPro" id="IPR004383">
    <property type="entry name" value="rRNA_lsu_MTrfase_RlmN/Cfr"/>
</dbReference>
<dbReference type="InterPro" id="IPR007197">
    <property type="entry name" value="rSAM"/>
</dbReference>
<dbReference type="NCBIfam" id="TIGR00048">
    <property type="entry name" value="rRNA_mod_RlmN"/>
    <property type="match status" value="1"/>
</dbReference>
<dbReference type="PANTHER" id="PTHR30544">
    <property type="entry name" value="23S RRNA METHYLTRANSFERASE"/>
    <property type="match status" value="1"/>
</dbReference>
<dbReference type="PANTHER" id="PTHR30544:SF5">
    <property type="entry name" value="RADICAL SAM CORE DOMAIN-CONTAINING PROTEIN"/>
    <property type="match status" value="1"/>
</dbReference>
<dbReference type="Pfam" id="PF04055">
    <property type="entry name" value="Radical_SAM"/>
    <property type="match status" value="1"/>
</dbReference>
<dbReference type="Pfam" id="PF21016">
    <property type="entry name" value="RlmN_N"/>
    <property type="match status" value="1"/>
</dbReference>
<dbReference type="PIRSF" id="PIRSF006004">
    <property type="entry name" value="CHP00048"/>
    <property type="match status" value="1"/>
</dbReference>
<dbReference type="SFLD" id="SFLDF00275">
    <property type="entry name" value="adenosine_C2_methyltransferase"/>
    <property type="match status" value="1"/>
</dbReference>
<dbReference type="SFLD" id="SFLDG01062">
    <property type="entry name" value="methyltransferase_(Class_A)"/>
    <property type="match status" value="1"/>
</dbReference>
<dbReference type="SMART" id="SM00729">
    <property type="entry name" value="Elp3"/>
    <property type="match status" value="1"/>
</dbReference>
<dbReference type="SUPFAM" id="SSF102114">
    <property type="entry name" value="Radical SAM enzymes"/>
    <property type="match status" value="1"/>
</dbReference>
<dbReference type="PROSITE" id="PS51918">
    <property type="entry name" value="RADICAL_SAM"/>
    <property type="match status" value="1"/>
</dbReference>
<evidence type="ECO:0000255" key="1">
    <source>
        <dbReference type="HAMAP-Rule" id="MF_01849"/>
    </source>
</evidence>
<evidence type="ECO:0000255" key="2">
    <source>
        <dbReference type="PROSITE-ProRule" id="PRU01266"/>
    </source>
</evidence>
<organism>
    <name type="scientific">Bradyrhizobium sp. (strain BTAi1 / ATCC BAA-1182)</name>
    <dbReference type="NCBI Taxonomy" id="288000"/>
    <lineage>
        <taxon>Bacteria</taxon>
        <taxon>Pseudomonadati</taxon>
        <taxon>Pseudomonadota</taxon>
        <taxon>Alphaproteobacteria</taxon>
        <taxon>Hyphomicrobiales</taxon>
        <taxon>Nitrobacteraceae</taxon>
        <taxon>Bradyrhizobium</taxon>
    </lineage>
</organism>
<sequence length="403" mass="45012">MARTAGLREPAAPLEKTPLETYVPPAKPSLIGLSRAELAARLGDVGVPERQQKMRVQQLWHWIYFRGARSFDEMSSVSKDTRTALAERFTVDRPEVVAEQISNDGTRKWLLRLPSGDDLQKAHEVECVYIPETDRGTLCVSSQVGCTLNCAFCHTGTQRLVRNLTAGEIVGQVMVARDRLNDWADRETPHGNRLITNIVMMGMGEPLYNFDAVRDALLIVSDNEGIGISRRRITLSTSGVVPNIKRAGEEIGVMLAISLHAVRDELRDELVPLNRKYPIAELLQACRDYPGASNARRITFEYVMLKGVNDSLDDARLLVKLLKGIPAKINLIPFNPWPGSAYECSDWEQIEKFSEYVFNAGYSSPVRTPRGRDILAACGQLKSETEKLSARERQALRAMAMTD</sequence>
<accession>A5E8P3</accession>